<organism>
    <name type="scientific">Staphylococcus haemolyticus (strain JCSC1435)</name>
    <dbReference type="NCBI Taxonomy" id="279808"/>
    <lineage>
        <taxon>Bacteria</taxon>
        <taxon>Bacillati</taxon>
        <taxon>Bacillota</taxon>
        <taxon>Bacilli</taxon>
        <taxon>Bacillales</taxon>
        <taxon>Staphylococcaceae</taxon>
        <taxon>Staphylococcus</taxon>
    </lineage>
</organism>
<gene>
    <name type="ordered locus">SH1478</name>
</gene>
<proteinExistence type="inferred from homology"/>
<sequence>MNPYEQYMQELAQQMRAELTENGFESLETSEDVSNYMKNVNEEDTTFVVINSTCGCAAGLARPAAVAVAEQNDKKPTNKITVFAGQDKEATQTMREYIQQVPSSPSYALFKGTELKHFIPREHIEGRDIQDICMDIKDAFDENC</sequence>
<protein>
    <recommendedName>
        <fullName evidence="1">Bacilliredoxin SH1478</fullName>
    </recommendedName>
</protein>
<comment type="similarity">
    <text evidence="1">Belongs to the bacilliredoxin family.</text>
</comment>
<feature type="chain" id="PRO_0000272018" description="Bacilliredoxin SH1478">
    <location>
        <begin position="1"/>
        <end position="144"/>
    </location>
</feature>
<name>Y1478_STAHJ</name>
<evidence type="ECO:0000305" key="1"/>
<reference key="1">
    <citation type="journal article" date="2005" name="J. Bacteriol.">
        <title>Whole-genome sequencing of Staphylococcus haemolyticus uncovers the extreme plasticity of its genome and the evolution of human-colonizing staphylococcal species.</title>
        <authorList>
            <person name="Takeuchi F."/>
            <person name="Watanabe S."/>
            <person name="Baba T."/>
            <person name="Yuzawa H."/>
            <person name="Ito T."/>
            <person name="Morimoto Y."/>
            <person name="Kuroda M."/>
            <person name="Cui L."/>
            <person name="Takahashi M."/>
            <person name="Ankai A."/>
            <person name="Baba S."/>
            <person name="Fukui S."/>
            <person name="Lee J.C."/>
            <person name="Hiramatsu K."/>
        </authorList>
    </citation>
    <scope>NUCLEOTIDE SEQUENCE [LARGE SCALE GENOMIC DNA]</scope>
    <source>
        <strain>JCSC1435</strain>
    </source>
</reference>
<dbReference type="EMBL" id="AP006716">
    <property type="protein sequence ID" value="BAE04787.1"/>
    <property type="molecule type" value="Genomic_DNA"/>
</dbReference>
<dbReference type="SMR" id="Q4L6D8"/>
<dbReference type="KEGG" id="sha:SH1478"/>
<dbReference type="eggNOG" id="ENOG5030YIF">
    <property type="taxonomic scope" value="Bacteria"/>
</dbReference>
<dbReference type="HOGENOM" id="CLU_132521_0_0_9"/>
<dbReference type="OrthoDB" id="9793981at2"/>
<dbReference type="Proteomes" id="UP000000543">
    <property type="component" value="Chromosome"/>
</dbReference>
<dbReference type="GO" id="GO:0045454">
    <property type="term" value="P:cell redox homeostasis"/>
    <property type="evidence" value="ECO:0000250"/>
    <property type="project" value="UniProtKB"/>
</dbReference>
<dbReference type="Gene3D" id="3.40.30.10">
    <property type="entry name" value="Glutaredoxin"/>
    <property type="match status" value="1"/>
</dbReference>
<dbReference type="InterPro" id="IPR009474">
    <property type="entry name" value="BrxB/BrxA"/>
</dbReference>
<dbReference type="NCBIfam" id="TIGR04191">
    <property type="entry name" value="YphP_YqiW"/>
    <property type="match status" value="1"/>
</dbReference>
<dbReference type="PANTHER" id="PTHR40052:SF2">
    <property type="entry name" value="BACILLIREDOXIN BRXA"/>
    <property type="match status" value="1"/>
</dbReference>
<dbReference type="PANTHER" id="PTHR40052">
    <property type="entry name" value="UPF0403 PROTEIN YQIW-RELATED"/>
    <property type="match status" value="1"/>
</dbReference>
<dbReference type="Pfam" id="PF06491">
    <property type="entry name" value="Disulph_isomer"/>
    <property type="match status" value="1"/>
</dbReference>
<accession>Q4L6D8</accession>